<keyword id="KW-0227">DNA damage</keyword>
<keyword id="KW-0234">DNA repair</keyword>
<keyword id="KW-0235">DNA replication</keyword>
<keyword id="KW-0436">Ligase</keyword>
<keyword id="KW-0460">Magnesium</keyword>
<keyword id="KW-0464">Manganese</keyword>
<keyword id="KW-0479">Metal-binding</keyword>
<keyword id="KW-0520">NAD</keyword>
<keyword id="KW-1185">Reference proteome</keyword>
<keyword id="KW-0862">Zinc</keyword>
<proteinExistence type="inferred from homology"/>
<comment type="function">
    <text evidence="1">DNA ligase that catalyzes the formation of phosphodiester linkages between 5'-phosphoryl and 3'-hydroxyl groups in double-stranded DNA using NAD as a coenzyme and as the energy source for the reaction. It is essential for DNA replication and repair of damaged DNA.</text>
</comment>
<comment type="catalytic activity">
    <reaction evidence="1">
        <text>NAD(+) + (deoxyribonucleotide)n-3'-hydroxyl + 5'-phospho-(deoxyribonucleotide)m = (deoxyribonucleotide)n+m + AMP + beta-nicotinamide D-nucleotide.</text>
        <dbReference type="EC" id="6.5.1.2"/>
    </reaction>
</comment>
<comment type="cofactor">
    <cofactor evidence="1">
        <name>Mg(2+)</name>
        <dbReference type="ChEBI" id="CHEBI:18420"/>
    </cofactor>
    <cofactor evidence="1">
        <name>Mn(2+)</name>
        <dbReference type="ChEBI" id="CHEBI:29035"/>
    </cofactor>
</comment>
<comment type="similarity">
    <text evidence="1">Belongs to the NAD-dependent DNA ligase family. LigA subfamily.</text>
</comment>
<protein>
    <recommendedName>
        <fullName evidence="1">DNA ligase</fullName>
        <ecNumber evidence="1">6.5.1.2</ecNumber>
    </recommendedName>
    <alternativeName>
        <fullName evidence="1">Polydeoxyribonucleotide synthase [NAD(+)]</fullName>
    </alternativeName>
</protein>
<feature type="chain" id="PRO_0000380349" description="DNA ligase">
    <location>
        <begin position="1"/>
        <end position="712"/>
    </location>
</feature>
<feature type="domain" description="BRCT" evidence="1">
    <location>
        <begin position="624"/>
        <end position="712"/>
    </location>
</feature>
<feature type="region of interest" description="Disordered" evidence="2">
    <location>
        <begin position="1"/>
        <end position="23"/>
    </location>
</feature>
<feature type="region of interest" description="Disordered" evidence="2">
    <location>
        <begin position="69"/>
        <end position="93"/>
    </location>
</feature>
<feature type="compositionally biased region" description="Low complexity" evidence="2">
    <location>
        <begin position="1"/>
        <end position="22"/>
    </location>
</feature>
<feature type="active site" description="N6-AMP-lysine intermediate" evidence="1">
    <location>
        <position position="131"/>
    </location>
</feature>
<feature type="binding site" evidence="1">
    <location>
        <begin position="53"/>
        <end position="57"/>
    </location>
    <ligand>
        <name>NAD(+)</name>
        <dbReference type="ChEBI" id="CHEBI:57540"/>
    </ligand>
</feature>
<feature type="binding site" evidence="1">
    <location>
        <begin position="104"/>
        <end position="105"/>
    </location>
    <ligand>
        <name>NAD(+)</name>
        <dbReference type="ChEBI" id="CHEBI:57540"/>
    </ligand>
</feature>
<feature type="binding site" evidence="1">
    <location>
        <position position="129"/>
    </location>
    <ligand>
        <name>NAD(+)</name>
        <dbReference type="ChEBI" id="CHEBI:57540"/>
    </ligand>
</feature>
<feature type="binding site" evidence="1">
    <location>
        <position position="152"/>
    </location>
    <ligand>
        <name>NAD(+)</name>
        <dbReference type="ChEBI" id="CHEBI:57540"/>
    </ligand>
</feature>
<feature type="binding site" evidence="1">
    <location>
        <position position="192"/>
    </location>
    <ligand>
        <name>NAD(+)</name>
        <dbReference type="ChEBI" id="CHEBI:57540"/>
    </ligand>
</feature>
<feature type="binding site" evidence="1">
    <location>
        <position position="308"/>
    </location>
    <ligand>
        <name>NAD(+)</name>
        <dbReference type="ChEBI" id="CHEBI:57540"/>
    </ligand>
</feature>
<feature type="binding site" evidence="1">
    <location>
        <position position="332"/>
    </location>
    <ligand>
        <name>NAD(+)</name>
        <dbReference type="ChEBI" id="CHEBI:57540"/>
    </ligand>
</feature>
<feature type="binding site" evidence="1">
    <location>
        <position position="426"/>
    </location>
    <ligand>
        <name>Zn(2+)</name>
        <dbReference type="ChEBI" id="CHEBI:29105"/>
    </ligand>
</feature>
<feature type="binding site" evidence="1">
    <location>
        <position position="429"/>
    </location>
    <ligand>
        <name>Zn(2+)</name>
        <dbReference type="ChEBI" id="CHEBI:29105"/>
    </ligand>
</feature>
<feature type="binding site" evidence="1">
    <location>
        <position position="445"/>
    </location>
    <ligand>
        <name>Zn(2+)</name>
        <dbReference type="ChEBI" id="CHEBI:29105"/>
    </ligand>
</feature>
<feature type="binding site" evidence="1">
    <location>
        <position position="451"/>
    </location>
    <ligand>
        <name>Zn(2+)</name>
        <dbReference type="ChEBI" id="CHEBI:29105"/>
    </ligand>
</feature>
<sequence length="712" mass="77277">MSTQYDSDSSPAASNSGSADPALAELAQQWQSLADQVRHHREVYYYGNPEISDAEFDALLTRLQEFENSHPEAVTGPSPTTEVAPSPPESSPFRNVDHQEPMLSLDNVFDTEQLSSWLDRTPAKTYLTELKIDGASINLLYRNGVLELALTRGDGTTGEDITHNARTLSDIPARLQPSEDFPVPEIVEIRGEVFIRVEDFAKMNAQRQAEGQKMFANPRNAAAGAMRQKDPAETARRPLRLICHGIGAREGFTPASQHAAYEALAAWGLPVSPYTKQVHSAKEVLEQVAYWADHRHDADHEMDGLVIKVDDTESQQRLGTTSRAPRWAIAYKYPPEEARTRLHDIRLGIGRTGRATPYAVMEPKYVAGSTVTMATLHNPSEAHRKGVRLGDEIMIRKAGEVIPEVLGPVEDARNGAEREFLFSSLCPECGTPLAPARGDDADWRCPNTRYCPGQLHTRLTYIAGRGAFDIDALGEKAAYDLIHSGVLPDETGLFSLTEEDLRRTDAYTTKSGALNKQGETLLTTLAAAKEVDLWRVIVALSIRHVGPTAAKALANHYGSIPDVAAADVETMSTVDGVGPIIAESVRDWFAVSWHQEIVDAWAAAGVRMEQDVTEQPSADAAGSIQADLLAGLSIVVTGTLEDFDRSSAKEAIESRGGKATGSVSKKTDYLVAGAKAGSKLTKAEELGIPVLDEAGFHKLLSEGPGKGDAEED</sequence>
<organism>
    <name type="scientific">Corynebacterium urealyticum (strain ATCC 43042 / DSM 7109)</name>
    <dbReference type="NCBI Taxonomy" id="504474"/>
    <lineage>
        <taxon>Bacteria</taxon>
        <taxon>Bacillati</taxon>
        <taxon>Actinomycetota</taxon>
        <taxon>Actinomycetes</taxon>
        <taxon>Mycobacteriales</taxon>
        <taxon>Corynebacteriaceae</taxon>
        <taxon>Corynebacterium</taxon>
    </lineage>
</organism>
<dbReference type="EC" id="6.5.1.2" evidence="1"/>
<dbReference type="EMBL" id="AM942444">
    <property type="protein sequence ID" value="CAQ04690.1"/>
    <property type="molecule type" value="Genomic_DNA"/>
</dbReference>
<dbReference type="RefSeq" id="WP_012359981.1">
    <property type="nucleotide sequence ID" value="NC_010545.1"/>
</dbReference>
<dbReference type="SMR" id="B1VG01"/>
<dbReference type="STRING" id="504474.cu0730"/>
<dbReference type="GeneID" id="60603506"/>
<dbReference type="KEGG" id="cur:cu0730"/>
<dbReference type="eggNOG" id="COG0272">
    <property type="taxonomic scope" value="Bacteria"/>
</dbReference>
<dbReference type="HOGENOM" id="CLU_007764_2_1_11"/>
<dbReference type="Proteomes" id="UP000001727">
    <property type="component" value="Chromosome"/>
</dbReference>
<dbReference type="GO" id="GO:0005829">
    <property type="term" value="C:cytosol"/>
    <property type="evidence" value="ECO:0007669"/>
    <property type="project" value="TreeGrafter"/>
</dbReference>
<dbReference type="GO" id="GO:0003911">
    <property type="term" value="F:DNA ligase (NAD+) activity"/>
    <property type="evidence" value="ECO:0007669"/>
    <property type="project" value="UniProtKB-UniRule"/>
</dbReference>
<dbReference type="GO" id="GO:0046872">
    <property type="term" value="F:metal ion binding"/>
    <property type="evidence" value="ECO:0007669"/>
    <property type="project" value="UniProtKB-KW"/>
</dbReference>
<dbReference type="GO" id="GO:0006281">
    <property type="term" value="P:DNA repair"/>
    <property type="evidence" value="ECO:0007669"/>
    <property type="project" value="UniProtKB-KW"/>
</dbReference>
<dbReference type="GO" id="GO:0006260">
    <property type="term" value="P:DNA replication"/>
    <property type="evidence" value="ECO:0007669"/>
    <property type="project" value="UniProtKB-KW"/>
</dbReference>
<dbReference type="CDD" id="cd17748">
    <property type="entry name" value="BRCT_DNA_ligase_like"/>
    <property type="match status" value="1"/>
</dbReference>
<dbReference type="CDD" id="cd00114">
    <property type="entry name" value="LIGANc"/>
    <property type="match status" value="1"/>
</dbReference>
<dbReference type="FunFam" id="1.10.150.20:FF:000006">
    <property type="entry name" value="DNA ligase"/>
    <property type="match status" value="1"/>
</dbReference>
<dbReference type="FunFam" id="3.30.470.30:FF:000001">
    <property type="entry name" value="DNA ligase"/>
    <property type="match status" value="1"/>
</dbReference>
<dbReference type="FunFam" id="3.40.50.10190:FF:000054">
    <property type="entry name" value="DNA ligase"/>
    <property type="match status" value="1"/>
</dbReference>
<dbReference type="Gene3D" id="6.20.10.30">
    <property type="match status" value="1"/>
</dbReference>
<dbReference type="Gene3D" id="1.10.150.20">
    <property type="entry name" value="5' to 3' exonuclease, C-terminal subdomain"/>
    <property type="match status" value="2"/>
</dbReference>
<dbReference type="Gene3D" id="3.40.50.10190">
    <property type="entry name" value="BRCT domain"/>
    <property type="match status" value="1"/>
</dbReference>
<dbReference type="Gene3D" id="3.30.470.30">
    <property type="entry name" value="DNA ligase/mRNA capping enzyme"/>
    <property type="match status" value="1"/>
</dbReference>
<dbReference type="Gene3D" id="1.10.287.610">
    <property type="entry name" value="Helix hairpin bin"/>
    <property type="match status" value="1"/>
</dbReference>
<dbReference type="Gene3D" id="2.40.50.140">
    <property type="entry name" value="Nucleic acid-binding proteins"/>
    <property type="match status" value="1"/>
</dbReference>
<dbReference type="HAMAP" id="MF_01588">
    <property type="entry name" value="DNA_ligase_A"/>
    <property type="match status" value="1"/>
</dbReference>
<dbReference type="InterPro" id="IPR001357">
    <property type="entry name" value="BRCT_dom"/>
</dbReference>
<dbReference type="InterPro" id="IPR036420">
    <property type="entry name" value="BRCT_dom_sf"/>
</dbReference>
<dbReference type="InterPro" id="IPR041663">
    <property type="entry name" value="DisA/LigA_HHH"/>
</dbReference>
<dbReference type="InterPro" id="IPR001679">
    <property type="entry name" value="DNA_ligase"/>
</dbReference>
<dbReference type="InterPro" id="IPR018239">
    <property type="entry name" value="DNA_ligase_AS"/>
</dbReference>
<dbReference type="InterPro" id="IPR013839">
    <property type="entry name" value="DNAligase_adenylation"/>
</dbReference>
<dbReference type="InterPro" id="IPR013840">
    <property type="entry name" value="DNAligase_N"/>
</dbReference>
<dbReference type="InterPro" id="IPR012340">
    <property type="entry name" value="NA-bd_OB-fold"/>
</dbReference>
<dbReference type="InterPro" id="IPR004150">
    <property type="entry name" value="NAD_DNA_ligase_OB"/>
</dbReference>
<dbReference type="InterPro" id="IPR010994">
    <property type="entry name" value="RuvA_2-like"/>
</dbReference>
<dbReference type="InterPro" id="IPR004149">
    <property type="entry name" value="Znf_DNAligase_C4"/>
</dbReference>
<dbReference type="NCBIfam" id="TIGR00575">
    <property type="entry name" value="dnlj"/>
    <property type="match status" value="1"/>
</dbReference>
<dbReference type="NCBIfam" id="NF005932">
    <property type="entry name" value="PRK07956.1"/>
    <property type="match status" value="1"/>
</dbReference>
<dbReference type="PANTHER" id="PTHR23389">
    <property type="entry name" value="CHROMOSOME TRANSMISSION FIDELITY FACTOR 18"/>
    <property type="match status" value="1"/>
</dbReference>
<dbReference type="PANTHER" id="PTHR23389:SF9">
    <property type="entry name" value="DNA LIGASE"/>
    <property type="match status" value="1"/>
</dbReference>
<dbReference type="Pfam" id="PF00533">
    <property type="entry name" value="BRCT"/>
    <property type="match status" value="1"/>
</dbReference>
<dbReference type="Pfam" id="PF01653">
    <property type="entry name" value="DNA_ligase_aden"/>
    <property type="match status" value="1"/>
</dbReference>
<dbReference type="Pfam" id="PF03120">
    <property type="entry name" value="DNA_ligase_OB"/>
    <property type="match status" value="1"/>
</dbReference>
<dbReference type="Pfam" id="PF03119">
    <property type="entry name" value="DNA_ligase_ZBD"/>
    <property type="match status" value="1"/>
</dbReference>
<dbReference type="Pfam" id="PF12826">
    <property type="entry name" value="HHH_2"/>
    <property type="match status" value="1"/>
</dbReference>
<dbReference type="PIRSF" id="PIRSF001604">
    <property type="entry name" value="LigA"/>
    <property type="match status" value="1"/>
</dbReference>
<dbReference type="SMART" id="SM00292">
    <property type="entry name" value="BRCT"/>
    <property type="match status" value="1"/>
</dbReference>
<dbReference type="SMART" id="SM00532">
    <property type="entry name" value="LIGANc"/>
    <property type="match status" value="1"/>
</dbReference>
<dbReference type="SUPFAM" id="SSF52113">
    <property type="entry name" value="BRCT domain"/>
    <property type="match status" value="1"/>
</dbReference>
<dbReference type="SUPFAM" id="SSF56091">
    <property type="entry name" value="DNA ligase/mRNA capping enzyme, catalytic domain"/>
    <property type="match status" value="1"/>
</dbReference>
<dbReference type="SUPFAM" id="SSF50249">
    <property type="entry name" value="Nucleic acid-binding proteins"/>
    <property type="match status" value="1"/>
</dbReference>
<dbReference type="SUPFAM" id="SSF47781">
    <property type="entry name" value="RuvA domain 2-like"/>
    <property type="match status" value="1"/>
</dbReference>
<dbReference type="PROSITE" id="PS50172">
    <property type="entry name" value="BRCT"/>
    <property type="match status" value="1"/>
</dbReference>
<dbReference type="PROSITE" id="PS01055">
    <property type="entry name" value="DNA_LIGASE_N1"/>
    <property type="match status" value="1"/>
</dbReference>
<accession>B1VG01</accession>
<name>DNLJ_CORU7</name>
<evidence type="ECO:0000255" key="1">
    <source>
        <dbReference type="HAMAP-Rule" id="MF_01588"/>
    </source>
</evidence>
<evidence type="ECO:0000256" key="2">
    <source>
        <dbReference type="SAM" id="MobiDB-lite"/>
    </source>
</evidence>
<reference key="1">
    <citation type="journal article" date="2008" name="J. Biotechnol.">
        <title>The lifestyle of Corynebacterium urealyticum derived from its complete genome sequence established by pyrosequencing.</title>
        <authorList>
            <person name="Tauch A."/>
            <person name="Trost E."/>
            <person name="Tilker A."/>
            <person name="Ludewig U."/>
            <person name="Schneiker S."/>
            <person name="Goesmann A."/>
            <person name="Arnold W."/>
            <person name="Bekel T."/>
            <person name="Brinkrolf K."/>
            <person name="Brune I."/>
            <person name="Goetker S."/>
            <person name="Kalinowski J."/>
            <person name="Kamp P.-B."/>
            <person name="Lobo F.P."/>
            <person name="Viehoever P."/>
            <person name="Weisshaar B."/>
            <person name="Soriano F."/>
            <person name="Droege M."/>
            <person name="Puehler A."/>
        </authorList>
    </citation>
    <scope>NUCLEOTIDE SEQUENCE [LARGE SCALE GENOMIC DNA]</scope>
    <source>
        <strain>ATCC 43042 / DSM 7109</strain>
    </source>
</reference>
<gene>
    <name evidence="1" type="primary">ligA</name>
    <name type="ordered locus">cu0730</name>
</gene>